<organism>
    <name type="scientific">Dictyostelium discoideum</name>
    <name type="common">Social amoeba</name>
    <dbReference type="NCBI Taxonomy" id="44689"/>
    <lineage>
        <taxon>Eukaryota</taxon>
        <taxon>Amoebozoa</taxon>
        <taxon>Evosea</taxon>
        <taxon>Eumycetozoa</taxon>
        <taxon>Dictyostelia</taxon>
        <taxon>Dictyosteliales</taxon>
        <taxon>Dictyosteliaceae</taxon>
        <taxon>Dictyostelium</taxon>
    </lineage>
</organism>
<feature type="chain" id="PRO_0000365579" description="Kinesin-related protein 4">
    <location>
        <begin position="1"/>
        <end position="1922"/>
    </location>
</feature>
<feature type="domain" description="Kinesin motor" evidence="3">
    <location>
        <begin position="22"/>
        <end position="343"/>
    </location>
</feature>
<feature type="region of interest" description="Disordered" evidence="4">
    <location>
        <begin position="448"/>
        <end position="538"/>
    </location>
</feature>
<feature type="region of interest" description="Disordered" evidence="4">
    <location>
        <begin position="1887"/>
        <end position="1922"/>
    </location>
</feature>
<feature type="coiled-coil region" evidence="2">
    <location>
        <begin position="562"/>
        <end position="1712"/>
    </location>
</feature>
<feature type="compositionally biased region" description="Low complexity" evidence="4">
    <location>
        <begin position="456"/>
        <end position="468"/>
    </location>
</feature>
<feature type="compositionally biased region" description="Acidic residues" evidence="4">
    <location>
        <begin position="469"/>
        <end position="480"/>
    </location>
</feature>
<feature type="compositionally biased region" description="Acidic residues" evidence="4">
    <location>
        <begin position="488"/>
        <end position="532"/>
    </location>
</feature>
<feature type="binding site" evidence="3">
    <location>
        <begin position="101"/>
        <end position="108"/>
    </location>
    <ligand>
        <name>ATP</name>
        <dbReference type="ChEBI" id="CHEBI:30616"/>
    </ligand>
</feature>
<feature type="sequence conflict" description="In Ref. 1; BAC56912." evidence="7" ref="1">
    <original>D</original>
    <variation>A</variation>
    <location>
        <position position="490"/>
    </location>
</feature>
<feature type="sequence conflict" description="In Ref. 1; BAC56912." evidence="7" ref="1">
    <original>N</original>
    <variation>H</variation>
    <location>
        <position position="493"/>
    </location>
</feature>
<feature type="sequence conflict" description="In Ref. 1; BAC56912." evidence="7" ref="1">
    <original>K</original>
    <variation>Q</variation>
    <location>
        <position position="533"/>
    </location>
</feature>
<feature type="sequence conflict" description="In Ref. 1; BAC56912." evidence="7" ref="1">
    <original>LN</original>
    <variation>FP</variation>
    <location>
        <begin position="536"/>
        <end position="537"/>
    </location>
</feature>
<feature type="sequence conflict" description="In Ref. 1; BAC56912." evidence="7" ref="1">
    <original>TI</original>
    <variation>QL</variation>
    <location>
        <begin position="546"/>
        <end position="547"/>
    </location>
</feature>
<feature type="sequence conflict" description="In Ref. 1; BAC56912." evidence="7" ref="1">
    <original>ISGQV</original>
    <variation>FQVKL</variation>
    <location>
        <begin position="559"/>
        <end position="563"/>
    </location>
</feature>
<feature type="sequence conflict" description="In Ref. 1; BAC56912." evidence="7" ref="1">
    <original>E</original>
    <variation>R</variation>
    <location>
        <position position="568"/>
    </location>
</feature>
<feature type="sequence conflict" description="In Ref. 1; BAC56912." evidence="7" ref="1">
    <location>
        <begin position="1006"/>
        <end position="1042"/>
    </location>
</feature>
<feature type="sequence conflict" description="In Ref. 1; BAC56912." evidence="7" ref="1">
    <original>N</original>
    <variation>S</variation>
    <location>
        <position position="1112"/>
    </location>
</feature>
<feature type="sequence conflict" description="In Ref. 1; BAC56912." evidence="7" ref="1">
    <original>KFE</original>
    <variation>NLK</variation>
    <location>
        <begin position="1420"/>
        <end position="1422"/>
    </location>
</feature>
<feature type="sequence conflict" description="In Ref. 1; BAC56912." evidence="7" ref="1">
    <original>I</original>
    <variation>T</variation>
    <location>
        <position position="1760"/>
    </location>
</feature>
<keyword id="KW-0067">ATP-binding</keyword>
<keyword id="KW-0131">Cell cycle</keyword>
<keyword id="KW-0132">Cell division</keyword>
<keyword id="KW-0175">Coiled coil</keyword>
<keyword id="KW-0963">Cytoplasm</keyword>
<keyword id="KW-0206">Cytoskeleton</keyword>
<keyword id="KW-0493">Microtubule</keyword>
<keyword id="KW-0498">Mitosis</keyword>
<keyword id="KW-0505">Motor protein</keyword>
<keyword id="KW-0547">Nucleotide-binding</keyword>
<keyword id="KW-1185">Reference proteome</keyword>
<keyword id="KW-0813">Transport</keyword>
<comment type="function">
    <text evidence="1 5">Microtubule-associated force-producing protein that plays a role in organelle transport. Its motor activity is directed toward the microtubule's plus end (By similarity). Cooperates with dynein in organizing spindle assembly during cell division.</text>
</comment>
<comment type="subcellular location">
    <subcellularLocation>
        <location evidence="7">Cytoplasm</location>
        <location evidence="7">Cytoskeleton</location>
    </subcellularLocation>
</comment>
<comment type="induction">
    <text evidence="6">During the developmental stage.</text>
</comment>
<comment type="domain">
    <text evidence="1">Composed of three structural domains: a large globular N-terminal domain which is responsible for the motor activity of kinesin (it hydrolyzes ATP and binds microtubule), a central alpha-helical coiled coil domain that mediates the heavy chain dimerization; and a small globular C-terminal domain which interacts with other proteins, vesicles and membranous organelles.</text>
</comment>
<comment type="disruption phenotype">
    <text evidence="5">Significantly impairs the rate of cell growth and, when combined with a previously characterized dynein inhibition, results in dramatic defects in mitotic spindle assembly.</text>
</comment>
<comment type="similarity">
    <text evidence="3">Belongs to the TRAFAC class myosin-kinesin ATPase superfamily. Kinesin family.</text>
</comment>
<comment type="sequence caution" evidence="7">
    <conflict type="miscellaneous discrepancy">
        <sequence resource="EMBL-CDS" id="BAC56912"/>
    </conflict>
    <text>The cDNA sequence misses the fragment coding for residues 1006 to 1042 localized between two repeated sequences and probably lost during cloning.</text>
</comment>
<proteinExistence type="evidence at transcript level"/>
<reference key="1">
    <citation type="journal article" date="1998" name="Mol. Biol. Cell">
        <title>A developmentally regulated kinesin-related motor protein from Dictyostelium discoideum.</title>
        <authorList>
            <person name="de Hostos E.L."/>
            <person name="McCaffrey G."/>
            <person name="Sucgang R."/>
            <person name="Pierce D.W."/>
            <person name="Vale R.D."/>
        </authorList>
    </citation>
    <scope>NUCLEOTIDE SEQUENCE [MRNA]</scope>
    <scope>NUCLEOTIDE SEQUENCE [GENOMIC DNA] OF 97-252</scope>
    <scope>INDUCTION</scope>
    <source>
        <strain>AX3</strain>
    </source>
</reference>
<reference key="2">
    <citation type="journal article" date="2005" name="Nature">
        <title>The genome of the social amoeba Dictyostelium discoideum.</title>
        <authorList>
            <person name="Eichinger L."/>
            <person name="Pachebat J.A."/>
            <person name="Gloeckner G."/>
            <person name="Rajandream M.A."/>
            <person name="Sucgang R."/>
            <person name="Berriman M."/>
            <person name="Song J."/>
            <person name="Olsen R."/>
            <person name="Szafranski K."/>
            <person name="Xu Q."/>
            <person name="Tunggal B."/>
            <person name="Kummerfeld S."/>
            <person name="Madera M."/>
            <person name="Konfortov B.A."/>
            <person name="Rivero F."/>
            <person name="Bankier A.T."/>
            <person name="Lehmann R."/>
            <person name="Hamlin N."/>
            <person name="Davies R."/>
            <person name="Gaudet P."/>
            <person name="Fey P."/>
            <person name="Pilcher K."/>
            <person name="Chen G."/>
            <person name="Saunders D."/>
            <person name="Sodergren E.J."/>
            <person name="Davis P."/>
            <person name="Kerhornou A."/>
            <person name="Nie X."/>
            <person name="Hall N."/>
            <person name="Anjard C."/>
            <person name="Hemphill L."/>
            <person name="Bason N."/>
            <person name="Farbrother P."/>
            <person name="Desany B."/>
            <person name="Just E."/>
            <person name="Morio T."/>
            <person name="Rost R."/>
            <person name="Churcher C.M."/>
            <person name="Cooper J."/>
            <person name="Haydock S."/>
            <person name="van Driessche N."/>
            <person name="Cronin A."/>
            <person name="Goodhead I."/>
            <person name="Muzny D.M."/>
            <person name="Mourier T."/>
            <person name="Pain A."/>
            <person name="Lu M."/>
            <person name="Harper D."/>
            <person name="Lindsay R."/>
            <person name="Hauser H."/>
            <person name="James K.D."/>
            <person name="Quiles M."/>
            <person name="Madan Babu M."/>
            <person name="Saito T."/>
            <person name="Buchrieser C."/>
            <person name="Wardroper A."/>
            <person name="Felder M."/>
            <person name="Thangavelu M."/>
            <person name="Johnson D."/>
            <person name="Knights A."/>
            <person name="Loulseged H."/>
            <person name="Mungall K.L."/>
            <person name="Oliver K."/>
            <person name="Price C."/>
            <person name="Quail M.A."/>
            <person name="Urushihara H."/>
            <person name="Hernandez J."/>
            <person name="Rabbinowitsch E."/>
            <person name="Steffen D."/>
            <person name="Sanders M."/>
            <person name="Ma J."/>
            <person name="Kohara Y."/>
            <person name="Sharp S."/>
            <person name="Simmonds M.N."/>
            <person name="Spiegler S."/>
            <person name="Tivey A."/>
            <person name="Sugano S."/>
            <person name="White B."/>
            <person name="Walker D."/>
            <person name="Woodward J.R."/>
            <person name="Winckler T."/>
            <person name="Tanaka Y."/>
            <person name="Shaulsky G."/>
            <person name="Schleicher M."/>
            <person name="Weinstock G.M."/>
            <person name="Rosenthal A."/>
            <person name="Cox E.C."/>
            <person name="Chisholm R.L."/>
            <person name="Gibbs R.A."/>
            <person name="Loomis W.F."/>
            <person name="Platzer M."/>
            <person name="Kay R.R."/>
            <person name="Williams J.G."/>
            <person name="Dear P.H."/>
            <person name="Noegel A.A."/>
            <person name="Barrell B.G."/>
            <person name="Kuspa A."/>
        </authorList>
    </citation>
    <scope>NUCLEOTIDE SEQUENCE [LARGE SCALE GENOMIC DNA]</scope>
    <source>
        <strain>AX4</strain>
    </source>
</reference>
<reference key="3">
    <citation type="journal article" date="2003" name="BMC Genomics">
        <title>Identification and phylogenetic analysis of Dictyostelium discoideum kinesin proteins.</title>
        <authorList>
            <person name="Kollmar M."/>
            <person name="Gloeckner G."/>
        </authorList>
    </citation>
    <scope>IDENTIFICATION</scope>
    <scope>NOMENCLATURE</scope>
</reference>
<reference key="4">
    <citation type="journal article" date="2008" name="BMC Cell Biol.">
        <title>Disruption of four kinesin genes in dictyostelium.</title>
        <authorList>
            <person name="Nag D.K."/>
            <person name="Tikhonenko I."/>
            <person name="Soga I."/>
            <person name="Koonce M.P."/>
        </authorList>
    </citation>
    <scope>FUNCTION</scope>
    <scope>DISRUPTION PHENOTYPE</scope>
</reference>
<protein>
    <recommendedName>
        <fullName>Kinesin-related protein 4</fullName>
    </recommendedName>
    <alternativeName>
        <fullName>Kinesin family member 4</fullName>
    </alternativeName>
    <alternativeName>
        <fullName>Kinesin-7</fullName>
    </alternativeName>
</protein>
<accession>Q54NP8</accession>
<accession>O15719</accession>
<accession>Q869B8</accession>
<sequence length="1922" mass="222483">MDNNNNNNNNNNDKNDKNELNKIKVAIRVRPLNSRELGIDQKIPWSISKDTISLSQNPNINFTYDYVFGIDSNTIDVYNAIAKSIVNSSLNGINGTIFAYGQTSSGKTFSMRGTESIPGIIKLSIKDIFKSIEDSILEKDYLLKVSYLEIYNEEIKDLLNPTISNKKKLKIHEDIYKGVVVANLKEEIVISPDQIFALMNFGEERRHIGSTMMNDSSSRSHTIFRMQIQSTCKQNGTIQMSTLTLVDLAGSERVSSTGAEGVRLKEGTHINKSLMTLSKVISKLSEEKTQQHVPYRDSKLTRILQPSLGGNSKTAILCTITPATTHQEESISTLQFAKRAKRVKTNYKINQVADANTMLKKYESEILELQNQLVKSEEINSLLRNTISTQEISSNNFKLGMKRFNDAIIGGSLINENKKKKKRRNTLDPSYLLKDKIIKKKIRKSENQKIKKIKNSENNISSSSSNSSGEEDDDDKDDENNYSINQDDKDDSNYEDDDDEDEDDDEESDTDNEDDEDNDEDNDDDDDDDDEFKDNLNLIEPLDDETIKKIKDLDDSLGISGQVKVKREDLDLIYEELEENKKLIEEYESTLELLNNQLDEKEIEHKELLIIIDQWEQECTNRENQNQELLEIDQQSKQSIQQLNDKLLETKQQSKQSIDQLNLQLIDIESESSKNKKSFENVLGVFEKSYRLAERLEDKYFTKEIESKKQIETLANSYLQLETTYQQQLNINQQSQQKIQSLNNDIEQFKLVWVPLKDQVNGYFQENQMFKQYIIELEEKYNTLIDLQKEVEQNYLTNTLEQQRNDQYQIEINQLTTEYNNQIQQLESTNQKLQTQLYNLLANATQSTQTLEQQLQTSKQEIDTLTNEIEQLKNQYDIIRVDNDNLSKESLELKQILLSKTQQLEEQLSLAQQQKGNIEIIQQLESIIVDNQQSIDQLKIEFDQSQQDNQSIKQSYNQLESTLTLAQSENQRLLTENKQFITSLNEIKSLFNSIQQQKETIQLEFNQRLQSWSLDSEKYKEIISTLEQSNQKSIESYESKSLEFQEKENQFDSLLTNYNQLFSKYNDLATSNESNRLEFDQFKKDSNQSIQSLESLERSLKSENDNLLQQSNLLKSQLESIEKQKQDQLIPIQLELESKKCELSKLSSQFSEQTKQVTQLLISVDQYKISTNKLESQISDRNEEINNLKLKAIEINALKEENISLKDQLTKLKKAPKSQTDREKDMIKKELEKLREKFNAIDAKLKQAIQDKQTIQSEKQSLEREIKDLKRSHTSTETELDKLKKTHLAADVKSKDFIALNKSVEILTKSQEQLKSTIIELESDLSKKNIELEKKQEELVTLNQDKLEKEKKTNQLESDHSSATIKLENYENQITQLTSEIIDLKSKFQEFKSESESNIKQQEINLKESNDLNQQLTNDKFELTKQLSDLKVEFDKSKQLWSTRSSESNDTIKELQESIISKDKERQLTSEQLVKLTDQINLKTWEYNDLNSQCQQLTKTLQNVKSSNEQQEQSIVSLESQTSAKIKSLELEISQIQENHRLEVLELNRCKNQLSEKQTLMEQDNIQLNERIIQLLHQKTKHENEILSMESNIIDLENQTKELKSKIETAQQDFEIEKNYHTGLNETNTTTIKTMNEELTRSNQTIQQLLFKISKLEQTSLQTQQQQELQQATISAQQQKQQQLADDQEKQQLYQKIKLIEKELESTKQKNLYITEQFTLKESEYLDTITDYVCKEKEFEKSKASLKTSATKIQALNDIIKKLQEEKPQQQPVVKVSSSQVVNQNGQPIKSILKKPKLVIIPREQLQQPPQFKELTLSTLNSNDSNCEPESVSASSTLTSLQSISKYIGKRSEQTTLEHDLTSSTLNLPLQQQNKKVRLVITKNNKTSTDNLTTTSTSLKSKSSSNGENKENQNNNIIIKNN</sequence>
<name>KIF4_DICDI</name>
<dbReference type="EMBL" id="AB102780">
    <property type="protein sequence ID" value="BAC56912.1"/>
    <property type="status" value="ALT_SEQ"/>
    <property type="molecule type" value="mRNA"/>
</dbReference>
<dbReference type="EMBL" id="AF015713">
    <property type="protein sequence ID" value="AAB66583.1"/>
    <property type="molecule type" value="Genomic_DNA"/>
</dbReference>
<dbReference type="EMBL" id="AAFI02000074">
    <property type="protein sequence ID" value="EAL64863.1"/>
    <property type="molecule type" value="Genomic_DNA"/>
</dbReference>
<dbReference type="RefSeq" id="XP_639868.1">
    <property type="nucleotide sequence ID" value="XM_634776.1"/>
</dbReference>
<dbReference type="SMR" id="Q54NP8"/>
<dbReference type="FunCoup" id="Q54NP8">
    <property type="interactions" value="18"/>
</dbReference>
<dbReference type="STRING" id="44689.Q54NP8"/>
<dbReference type="PaxDb" id="44689-DDB0191404"/>
<dbReference type="EnsemblProtists" id="EAL64863">
    <property type="protein sequence ID" value="EAL64863"/>
    <property type="gene ID" value="DDB_G0285101"/>
</dbReference>
<dbReference type="GeneID" id="8624939"/>
<dbReference type="KEGG" id="ddi:DDB_G0285101"/>
<dbReference type="dictyBase" id="DDB_G0285101">
    <property type="gene designation" value="kif4"/>
</dbReference>
<dbReference type="VEuPathDB" id="AmoebaDB:DDB_G0285101"/>
<dbReference type="eggNOG" id="KOG0242">
    <property type="taxonomic scope" value="Eukaryota"/>
</dbReference>
<dbReference type="HOGENOM" id="CLU_235364_0_0_1"/>
<dbReference type="InParanoid" id="Q54NP8"/>
<dbReference type="OMA" id="ENECFSA"/>
<dbReference type="PhylomeDB" id="Q54NP8"/>
<dbReference type="PRO" id="PR:Q54NP8"/>
<dbReference type="Proteomes" id="UP000002195">
    <property type="component" value="Chromosome 4"/>
</dbReference>
<dbReference type="GO" id="GO:0000775">
    <property type="term" value="C:chromosome, centromeric region"/>
    <property type="evidence" value="ECO:0000250"/>
    <property type="project" value="dictyBase"/>
</dbReference>
<dbReference type="GO" id="GO:0005737">
    <property type="term" value="C:cytoplasm"/>
    <property type="evidence" value="ECO:0007669"/>
    <property type="project" value="UniProtKB-KW"/>
</dbReference>
<dbReference type="GO" id="GO:0005874">
    <property type="term" value="C:microtubule"/>
    <property type="evidence" value="ECO:0000318"/>
    <property type="project" value="GO_Central"/>
</dbReference>
<dbReference type="GO" id="GO:0005524">
    <property type="term" value="F:ATP binding"/>
    <property type="evidence" value="ECO:0007669"/>
    <property type="project" value="UniProtKB-KW"/>
</dbReference>
<dbReference type="GO" id="GO:0043515">
    <property type="term" value="F:kinetochore binding"/>
    <property type="evidence" value="ECO:0000250"/>
    <property type="project" value="dictyBase"/>
</dbReference>
<dbReference type="GO" id="GO:0008017">
    <property type="term" value="F:microtubule binding"/>
    <property type="evidence" value="ECO:0000318"/>
    <property type="project" value="GO_Central"/>
</dbReference>
<dbReference type="GO" id="GO:0003777">
    <property type="term" value="F:microtubule motor activity"/>
    <property type="evidence" value="ECO:0000250"/>
    <property type="project" value="dictyBase"/>
</dbReference>
<dbReference type="GO" id="GO:0051301">
    <property type="term" value="P:cell division"/>
    <property type="evidence" value="ECO:0007669"/>
    <property type="project" value="UniProtKB-KW"/>
</dbReference>
<dbReference type="GO" id="GO:0007018">
    <property type="term" value="P:microtubule-based movement"/>
    <property type="evidence" value="ECO:0000318"/>
    <property type="project" value="GO_Central"/>
</dbReference>
<dbReference type="GO" id="GO:0000278">
    <property type="term" value="P:mitotic cell cycle"/>
    <property type="evidence" value="ECO:0000318"/>
    <property type="project" value="GO_Central"/>
</dbReference>
<dbReference type="GO" id="GO:0090307">
    <property type="term" value="P:mitotic spindle assembly"/>
    <property type="evidence" value="ECO:0000316"/>
    <property type="project" value="dictyBase"/>
</dbReference>
<dbReference type="CDD" id="cd01374">
    <property type="entry name" value="KISc_CENP_E"/>
    <property type="match status" value="1"/>
</dbReference>
<dbReference type="FunFam" id="3.40.850.10:FF:000177">
    <property type="entry name" value="Kinesin-like protein"/>
    <property type="match status" value="1"/>
</dbReference>
<dbReference type="Gene3D" id="3.40.850.10">
    <property type="entry name" value="Kinesin motor domain"/>
    <property type="match status" value="1"/>
</dbReference>
<dbReference type="InterPro" id="IPR027640">
    <property type="entry name" value="Kinesin-like_fam"/>
</dbReference>
<dbReference type="InterPro" id="IPR019821">
    <property type="entry name" value="Kinesin_motor_CS"/>
</dbReference>
<dbReference type="InterPro" id="IPR001752">
    <property type="entry name" value="Kinesin_motor_dom"/>
</dbReference>
<dbReference type="InterPro" id="IPR036961">
    <property type="entry name" value="Kinesin_motor_dom_sf"/>
</dbReference>
<dbReference type="InterPro" id="IPR027417">
    <property type="entry name" value="P-loop_NTPase"/>
</dbReference>
<dbReference type="PANTHER" id="PTHR47968">
    <property type="entry name" value="CENTROMERE PROTEIN E"/>
    <property type="match status" value="1"/>
</dbReference>
<dbReference type="PANTHER" id="PTHR47968:SF75">
    <property type="entry name" value="CENTROMERE-ASSOCIATED PROTEIN E"/>
    <property type="match status" value="1"/>
</dbReference>
<dbReference type="Pfam" id="PF00225">
    <property type="entry name" value="Kinesin"/>
    <property type="match status" value="1"/>
</dbReference>
<dbReference type="PRINTS" id="PR00380">
    <property type="entry name" value="KINESINHEAVY"/>
</dbReference>
<dbReference type="SMART" id="SM00129">
    <property type="entry name" value="KISc"/>
    <property type="match status" value="1"/>
</dbReference>
<dbReference type="SUPFAM" id="SSF52540">
    <property type="entry name" value="P-loop containing nucleoside triphosphate hydrolases"/>
    <property type="match status" value="1"/>
</dbReference>
<dbReference type="PROSITE" id="PS00411">
    <property type="entry name" value="KINESIN_MOTOR_1"/>
    <property type="match status" value="1"/>
</dbReference>
<dbReference type="PROSITE" id="PS50067">
    <property type="entry name" value="KINESIN_MOTOR_2"/>
    <property type="match status" value="1"/>
</dbReference>
<gene>
    <name type="primary">kif4</name>
    <name type="synonym">K4</name>
    <name type="synonym">ksnD</name>
    <name type="ORF">DDB_G0285101</name>
</gene>
<evidence type="ECO:0000250" key="1"/>
<evidence type="ECO:0000255" key="2"/>
<evidence type="ECO:0000255" key="3">
    <source>
        <dbReference type="PROSITE-ProRule" id="PRU00283"/>
    </source>
</evidence>
<evidence type="ECO:0000256" key="4">
    <source>
        <dbReference type="SAM" id="MobiDB-lite"/>
    </source>
</evidence>
<evidence type="ECO:0000269" key="5">
    <source>
    </source>
</evidence>
<evidence type="ECO:0000269" key="6">
    <source>
    </source>
</evidence>
<evidence type="ECO:0000305" key="7"/>